<feature type="signal peptide" evidence="2">
    <location>
        <begin position="1"/>
        <end position="64"/>
    </location>
</feature>
<feature type="propeptide" id="PRO_0000026915">
    <location>
        <begin position="65"/>
        <end position="204"/>
    </location>
</feature>
<feature type="chain" id="PRO_0000026916" description="Streptogrisin-D">
    <location>
        <begin position="205"/>
        <end position="392"/>
    </location>
</feature>
<feature type="active site" description="Charge relay system">
    <location>
        <position position="237"/>
    </location>
</feature>
<feature type="active site" description="Charge relay system">
    <location>
        <position position="266"/>
    </location>
</feature>
<feature type="active site" description="Charge relay system">
    <location>
        <position position="348"/>
    </location>
</feature>
<feature type="disulfide bond" evidence="1">
    <location>
        <begin position="218"/>
        <end position="238"/>
    </location>
</feature>
<feature type="disulfide bond" evidence="1">
    <location>
        <begin position="342"/>
        <end position="369"/>
    </location>
</feature>
<keyword id="KW-0903">Direct protein sequencing</keyword>
<keyword id="KW-1015">Disulfide bond</keyword>
<keyword id="KW-0378">Hydrolase</keyword>
<keyword id="KW-0645">Protease</keyword>
<keyword id="KW-0720">Serine protease</keyword>
<keyword id="KW-0732">Signal</keyword>
<keyword id="KW-0865">Zymogen</keyword>
<proteinExistence type="evidence at protein level"/>
<organism>
    <name type="scientific">Streptomyces griseus</name>
    <dbReference type="NCBI Taxonomy" id="1911"/>
    <lineage>
        <taxon>Bacteria</taxon>
        <taxon>Bacillati</taxon>
        <taxon>Actinomycetota</taxon>
        <taxon>Actinomycetes</taxon>
        <taxon>Kitasatosporales</taxon>
        <taxon>Streptomycetaceae</taxon>
        <taxon>Streptomyces</taxon>
    </lineage>
</organism>
<evidence type="ECO:0000250" key="1"/>
<evidence type="ECO:0000255" key="2"/>
<evidence type="ECO:0000305" key="3"/>
<dbReference type="EC" id="3.4.21.-"/>
<dbReference type="EMBL" id="L29019">
    <property type="protein sequence ID" value="AAA74409.1"/>
    <property type="molecule type" value="Genomic_DNA"/>
</dbReference>
<dbReference type="PIR" id="A56123">
    <property type="entry name" value="A56123"/>
</dbReference>
<dbReference type="SMR" id="P52321"/>
<dbReference type="MEROPS" id="S01.266"/>
<dbReference type="OMA" id="MKHRRIP"/>
<dbReference type="GO" id="GO:0005576">
    <property type="term" value="C:extracellular region"/>
    <property type="evidence" value="ECO:0007669"/>
    <property type="project" value="InterPro"/>
</dbReference>
<dbReference type="GO" id="GO:0004252">
    <property type="term" value="F:serine-type endopeptidase activity"/>
    <property type="evidence" value="ECO:0007669"/>
    <property type="project" value="InterPro"/>
</dbReference>
<dbReference type="GO" id="GO:0006508">
    <property type="term" value="P:proteolysis"/>
    <property type="evidence" value="ECO:0007669"/>
    <property type="project" value="UniProtKB-KW"/>
</dbReference>
<dbReference type="CDD" id="cd21112">
    <property type="entry name" value="alphaLP-like"/>
    <property type="match status" value="1"/>
</dbReference>
<dbReference type="Gene3D" id="2.40.10.10">
    <property type="entry name" value="Trypsin-like serine proteases"/>
    <property type="match status" value="2"/>
</dbReference>
<dbReference type="InterPro" id="IPR004236">
    <property type="entry name" value="Pept_S1_alpha_lytic"/>
</dbReference>
<dbReference type="InterPro" id="IPR001316">
    <property type="entry name" value="Pept_S1A_streptogrisin"/>
</dbReference>
<dbReference type="InterPro" id="IPR009003">
    <property type="entry name" value="Peptidase_S1_PA"/>
</dbReference>
<dbReference type="InterPro" id="IPR043504">
    <property type="entry name" value="Peptidase_S1_PA_chymotrypsin"/>
</dbReference>
<dbReference type="InterPro" id="IPR001254">
    <property type="entry name" value="Trypsin_dom"/>
</dbReference>
<dbReference type="InterPro" id="IPR018114">
    <property type="entry name" value="TRYPSIN_HIS"/>
</dbReference>
<dbReference type="InterPro" id="IPR033116">
    <property type="entry name" value="TRYPSIN_SER"/>
</dbReference>
<dbReference type="Pfam" id="PF02983">
    <property type="entry name" value="Pro_Al_protease"/>
    <property type="match status" value="1"/>
</dbReference>
<dbReference type="Pfam" id="PF00089">
    <property type="entry name" value="Trypsin"/>
    <property type="match status" value="1"/>
</dbReference>
<dbReference type="PIRSF" id="PIRSF001134">
    <property type="entry name" value="Streptogrisin"/>
    <property type="match status" value="1"/>
</dbReference>
<dbReference type="PRINTS" id="PR00861">
    <property type="entry name" value="ALYTICPTASE"/>
</dbReference>
<dbReference type="SUPFAM" id="SSF50494">
    <property type="entry name" value="Trypsin-like serine proteases"/>
    <property type="match status" value="1"/>
</dbReference>
<dbReference type="PROSITE" id="PS00134">
    <property type="entry name" value="TRYPSIN_HIS"/>
    <property type="match status" value="1"/>
</dbReference>
<dbReference type="PROSITE" id="PS00135">
    <property type="entry name" value="TRYPSIN_SER"/>
    <property type="match status" value="1"/>
</dbReference>
<comment type="function">
    <text>Has a primary specificity for large aliphatic or aromatic amino acids.</text>
</comment>
<comment type="subunit">
    <text>Homodimer.</text>
</comment>
<comment type="similarity">
    <text evidence="3">Belongs to the peptidase S1 family.</text>
</comment>
<gene>
    <name type="primary">sprD</name>
</gene>
<protein>
    <recommendedName>
        <fullName>Streptogrisin-D</fullName>
        <ecNumber>3.4.21.-</ecNumber>
    </recommendedName>
    <alternativeName>
        <fullName>SGPD</fullName>
    </alternativeName>
    <alternativeName>
        <fullName>Serine protease D</fullName>
    </alternativeName>
</protein>
<name>PRTD_STRGR</name>
<accession>P52321</accession>
<reference key="1">
    <citation type="journal article" date="1995" name="J. Biol. Chem.">
        <title>Protease evolution in Streptomyces griseus. Discovery of a novel dimeric enzymes.</title>
        <authorList>
            <person name="Sidhu S.S."/>
            <person name="Kalmar G.B."/>
            <person name="Willis L.G."/>
            <person name="Borgford T.J."/>
        </authorList>
    </citation>
    <scope>NUCLEOTIDE SEQUENCE [GENOMIC DNA]</scope>
    <scope>PARTIAL PROTEIN SEQUENCE</scope>
    <source>
        <strain>IMRU 3499</strain>
    </source>
</reference>
<sequence length="392" mass="40113">MCVSRRRNSGRPILRVRAPHLLRARPHRRSKLKHRRISRKRATLAGSAVVALVAAGFTFQTANASDDVPAFGAKTLSADAAGKLATTLDRDLGADAAGSYYDATAKTLVVNVVDEAGAEQVRQAGGKARIVENSLAELKSARGTLTEKATIPGTSWAVDPVSNKVLVTADSTVDGAAWKKLSAVVEGLGGKAELNRTAGEFTPLIAGGDAIWGSGSRCSLGFNVVKGGEPYFLTAGHCTESVTSWSDTQGGSEIGANEGSSFPENDYGLVKYTSDTAHPSEVNLYDGSTQAITQAGDATVGQAVTRSGSTTQVHDGEVTALDATVNYGNGDIVNGLIQTTVCAEPGDSGGALFAGDTALGLTSGGSGDCSSGGTTFFQPVPEALAAYGAEIG</sequence>